<evidence type="ECO:0000255" key="1">
    <source>
        <dbReference type="HAMAP-Rule" id="MF_00633"/>
    </source>
</evidence>
<feature type="chain" id="PRO_0000061789" description="Cytochrome b6">
    <location>
        <begin position="1"/>
        <end position="215"/>
    </location>
</feature>
<feature type="transmembrane region" description="Helical" evidence="1">
    <location>
        <begin position="32"/>
        <end position="52"/>
    </location>
</feature>
<feature type="transmembrane region" description="Helical" evidence="1">
    <location>
        <begin position="90"/>
        <end position="110"/>
    </location>
</feature>
<feature type="transmembrane region" description="Helical" evidence="1">
    <location>
        <begin position="116"/>
        <end position="136"/>
    </location>
</feature>
<feature type="transmembrane region" description="Helical" evidence="1">
    <location>
        <begin position="186"/>
        <end position="206"/>
    </location>
</feature>
<feature type="binding site" description="covalent" evidence="1">
    <location>
        <position position="35"/>
    </location>
    <ligand>
        <name>heme c</name>
        <dbReference type="ChEBI" id="CHEBI:61717"/>
    </ligand>
</feature>
<feature type="binding site" description="axial binding residue" evidence="1">
    <location>
        <position position="86"/>
    </location>
    <ligand>
        <name>heme b</name>
        <dbReference type="ChEBI" id="CHEBI:60344"/>
        <label>2</label>
    </ligand>
    <ligandPart>
        <name>Fe</name>
        <dbReference type="ChEBI" id="CHEBI:18248"/>
    </ligandPart>
</feature>
<feature type="binding site" description="axial binding residue" evidence="1">
    <location>
        <position position="100"/>
    </location>
    <ligand>
        <name>heme b</name>
        <dbReference type="ChEBI" id="CHEBI:60344"/>
        <label>1</label>
    </ligand>
    <ligandPart>
        <name>Fe</name>
        <dbReference type="ChEBI" id="CHEBI:18248"/>
    </ligandPart>
</feature>
<feature type="binding site" description="axial binding residue" evidence="1">
    <location>
        <position position="187"/>
    </location>
    <ligand>
        <name>heme b</name>
        <dbReference type="ChEBI" id="CHEBI:60344"/>
        <label>2</label>
    </ligand>
    <ligandPart>
        <name>Fe</name>
        <dbReference type="ChEBI" id="CHEBI:18248"/>
    </ligandPart>
</feature>
<feature type="binding site" description="axial binding residue" evidence="1">
    <location>
        <position position="202"/>
    </location>
    <ligand>
        <name>heme b</name>
        <dbReference type="ChEBI" id="CHEBI:60344"/>
        <label>1</label>
    </ligand>
    <ligandPart>
        <name>Fe</name>
        <dbReference type="ChEBI" id="CHEBI:18248"/>
    </ligandPart>
</feature>
<gene>
    <name evidence="1" type="primary">petB</name>
</gene>
<accession>Q71KQ6</accession>
<comment type="function">
    <text evidence="1">Component of the cytochrome b6-f complex, which mediates electron transfer between photosystem II (PSII) and photosystem I (PSI), cyclic electron flow around PSI, and state transitions.</text>
</comment>
<comment type="cofactor">
    <cofactor evidence="1">
        <name>heme b</name>
        <dbReference type="ChEBI" id="CHEBI:60344"/>
    </cofactor>
    <text evidence="1">Binds 2 heme b groups non-covalently with two histidine residues as axial ligands.</text>
</comment>
<comment type="cofactor">
    <cofactor evidence="1">
        <name>heme c</name>
        <dbReference type="ChEBI" id="CHEBI:61717"/>
    </cofactor>
    <text evidence="1">Binds one heme group covalently by a single cysteine link with no axial amino acid ligand. This heme was named heme ci.</text>
</comment>
<comment type="subunit">
    <text evidence="1">The 4 large subunits of the cytochrome b6-f complex are cytochrome b6, subunit IV (17 kDa polypeptide, PetD), cytochrome f and the Rieske protein, while the 4 small subunits are PetG, PetL, PetM and PetN. The complex functions as a dimer.</text>
</comment>
<comment type="subcellular location">
    <subcellularLocation>
        <location evidence="1">Plastid</location>
        <location evidence="1">Chloroplast thylakoid membrane</location>
        <topology evidence="1">Multi-pass membrane protein</topology>
    </subcellularLocation>
</comment>
<comment type="miscellaneous">
    <text evidence="1">Heme 1 (or BH or b566) is high-potential and absorbs at about 566 nm, and heme 2 (or BL or b562) is low-potential and absorbs at about 562 nm.</text>
</comment>
<comment type="similarity">
    <text evidence="1">Belongs to the cytochrome b family. PetB subfamily.</text>
</comment>
<keyword id="KW-0150">Chloroplast</keyword>
<keyword id="KW-0249">Electron transport</keyword>
<keyword id="KW-0349">Heme</keyword>
<keyword id="KW-0408">Iron</keyword>
<keyword id="KW-0472">Membrane</keyword>
<keyword id="KW-0479">Metal-binding</keyword>
<keyword id="KW-0602">Photosynthesis</keyword>
<keyword id="KW-0934">Plastid</keyword>
<keyword id="KW-0793">Thylakoid</keyword>
<keyword id="KW-0812">Transmembrane</keyword>
<keyword id="KW-1133">Transmembrane helix</keyword>
<keyword id="KW-0813">Transport</keyword>
<name>CYB6_COLOB</name>
<proteinExistence type="inferred from homology"/>
<geneLocation type="chloroplast"/>
<sequence>MGKVYDWFEERLEIQAIADDISSKYVPPHVNIFYCLGGITFTCFLLQVASGFAMTFYYRPTVAEAFASVQYIMTDVNFGWLIRSVHRWSASMMVLTMILHVFRVYLTGGFKKPRELTWVTGVILAVLTVSFGVTGYSLPWDQVGYWAVKIVTGVPDAIPVIGSPLVELLRGSVSVGQSTLTRFYSLHTFILPLLTAVFMLMHFLMIRKQGISGPL</sequence>
<reference key="1">
    <citation type="submission" date="2002-02" db="EMBL/GenBank/DDBJ databases">
        <title>psbB gene cluster of Charophyceae.</title>
        <authorList>
            <person name="Lee J."/>
            <person name="Manhart J.R."/>
        </authorList>
    </citation>
    <scope>NUCLEOTIDE SEQUENCE [GENOMIC DNA]</scope>
</reference>
<dbReference type="EMBL" id="AF482495">
    <property type="protein sequence ID" value="AAQ05900.1"/>
    <property type="molecule type" value="Genomic_DNA"/>
</dbReference>
<dbReference type="SMR" id="Q71KQ6"/>
<dbReference type="GO" id="GO:0009535">
    <property type="term" value="C:chloroplast thylakoid membrane"/>
    <property type="evidence" value="ECO:0007669"/>
    <property type="project" value="UniProtKB-SubCell"/>
</dbReference>
<dbReference type="GO" id="GO:0045158">
    <property type="term" value="F:electron transporter, transferring electrons within cytochrome b6/f complex of photosystem II activity"/>
    <property type="evidence" value="ECO:0007669"/>
    <property type="project" value="UniProtKB-UniRule"/>
</dbReference>
<dbReference type="GO" id="GO:0046872">
    <property type="term" value="F:metal ion binding"/>
    <property type="evidence" value="ECO:0007669"/>
    <property type="project" value="UniProtKB-KW"/>
</dbReference>
<dbReference type="GO" id="GO:0016491">
    <property type="term" value="F:oxidoreductase activity"/>
    <property type="evidence" value="ECO:0007669"/>
    <property type="project" value="InterPro"/>
</dbReference>
<dbReference type="GO" id="GO:0015979">
    <property type="term" value="P:photosynthesis"/>
    <property type="evidence" value="ECO:0007669"/>
    <property type="project" value="UniProtKB-UniRule"/>
</dbReference>
<dbReference type="GO" id="GO:0022904">
    <property type="term" value="P:respiratory electron transport chain"/>
    <property type="evidence" value="ECO:0007669"/>
    <property type="project" value="InterPro"/>
</dbReference>
<dbReference type="CDD" id="cd00284">
    <property type="entry name" value="Cytochrome_b_N"/>
    <property type="match status" value="1"/>
</dbReference>
<dbReference type="FunFam" id="1.20.810.10:FF:000001">
    <property type="entry name" value="Cytochrome b6"/>
    <property type="match status" value="1"/>
</dbReference>
<dbReference type="Gene3D" id="1.20.810.10">
    <property type="entry name" value="Cytochrome Bc1 Complex, Chain C"/>
    <property type="match status" value="1"/>
</dbReference>
<dbReference type="HAMAP" id="MF_00633">
    <property type="entry name" value="Cytb6_f_cytb6"/>
    <property type="match status" value="1"/>
</dbReference>
<dbReference type="InterPro" id="IPR005797">
    <property type="entry name" value="Cyt_b/b6_N"/>
</dbReference>
<dbReference type="InterPro" id="IPR023530">
    <property type="entry name" value="Cyt_B6_PetB"/>
</dbReference>
<dbReference type="InterPro" id="IPR027387">
    <property type="entry name" value="Cytb/b6-like_sf"/>
</dbReference>
<dbReference type="InterPro" id="IPR048259">
    <property type="entry name" value="Cytochrome_b_N_euk/bac"/>
</dbReference>
<dbReference type="InterPro" id="IPR016174">
    <property type="entry name" value="Di-haem_cyt_TM"/>
</dbReference>
<dbReference type="NCBIfam" id="NF002990">
    <property type="entry name" value="PRK03735.1"/>
    <property type="match status" value="1"/>
</dbReference>
<dbReference type="PANTHER" id="PTHR19271">
    <property type="entry name" value="CYTOCHROME B"/>
    <property type="match status" value="1"/>
</dbReference>
<dbReference type="PANTHER" id="PTHR19271:SF16">
    <property type="entry name" value="CYTOCHROME B"/>
    <property type="match status" value="1"/>
</dbReference>
<dbReference type="Pfam" id="PF00033">
    <property type="entry name" value="Cytochrome_B"/>
    <property type="match status" value="1"/>
</dbReference>
<dbReference type="PIRSF" id="PIRSF000032">
    <property type="entry name" value="Cytochrome_b6"/>
    <property type="match status" value="1"/>
</dbReference>
<dbReference type="SUPFAM" id="SSF81342">
    <property type="entry name" value="Transmembrane di-heme cytochromes"/>
    <property type="match status" value="1"/>
</dbReference>
<dbReference type="PROSITE" id="PS51002">
    <property type="entry name" value="CYTB_NTER"/>
    <property type="match status" value="1"/>
</dbReference>
<protein>
    <recommendedName>
        <fullName evidence="1">Cytochrome b6</fullName>
    </recommendedName>
</protein>
<organism>
    <name type="scientific">Coleochaete orbicularis</name>
    <name type="common">Charophycean green alga</name>
    <dbReference type="NCBI Taxonomy" id="3124"/>
    <lineage>
        <taxon>Eukaryota</taxon>
        <taxon>Viridiplantae</taxon>
        <taxon>Streptophyta</taxon>
        <taxon>Coleochaetophyceae</taxon>
        <taxon>Coleochaetales</taxon>
        <taxon>Coleochaetaceae</taxon>
        <taxon>Coleochaete</taxon>
    </lineage>
</organism>